<organism>
    <name type="scientific">Vibrio cholerae serotype O1 (strain ATCC 39315 / El Tor Inaba N16961)</name>
    <dbReference type="NCBI Taxonomy" id="243277"/>
    <lineage>
        <taxon>Bacteria</taxon>
        <taxon>Pseudomonadati</taxon>
        <taxon>Pseudomonadota</taxon>
        <taxon>Gammaproteobacteria</taxon>
        <taxon>Vibrionales</taxon>
        <taxon>Vibrionaceae</taxon>
        <taxon>Vibrio</taxon>
    </lineage>
</organism>
<feature type="chain" id="PRO_0000060492" description="tRNA (guanine-N(1)-)-methyltransferase">
    <location>
        <begin position="1"/>
        <end position="247"/>
    </location>
</feature>
<feature type="binding site" evidence="1">
    <location>
        <position position="113"/>
    </location>
    <ligand>
        <name>S-adenosyl-L-methionine</name>
        <dbReference type="ChEBI" id="CHEBI:59789"/>
    </ligand>
</feature>
<feature type="binding site" evidence="1">
    <location>
        <begin position="133"/>
        <end position="138"/>
    </location>
    <ligand>
        <name>S-adenosyl-L-methionine</name>
        <dbReference type="ChEBI" id="CHEBI:59789"/>
    </ligand>
</feature>
<evidence type="ECO:0000250" key="1"/>
<evidence type="ECO:0000305" key="2"/>
<comment type="function">
    <text evidence="1">Specifically methylates guanosine-37 in various tRNAs.</text>
</comment>
<comment type="catalytic activity">
    <reaction>
        <text>guanosine(37) in tRNA + S-adenosyl-L-methionine = N(1)-methylguanosine(37) in tRNA + S-adenosyl-L-homocysteine + H(+)</text>
        <dbReference type="Rhea" id="RHEA:36899"/>
        <dbReference type="Rhea" id="RHEA-COMP:10145"/>
        <dbReference type="Rhea" id="RHEA-COMP:10147"/>
        <dbReference type="ChEBI" id="CHEBI:15378"/>
        <dbReference type="ChEBI" id="CHEBI:57856"/>
        <dbReference type="ChEBI" id="CHEBI:59789"/>
        <dbReference type="ChEBI" id="CHEBI:73542"/>
        <dbReference type="ChEBI" id="CHEBI:74269"/>
        <dbReference type="EC" id="2.1.1.228"/>
    </reaction>
</comment>
<comment type="subunit">
    <text evidence="1">Homodimer.</text>
</comment>
<comment type="subcellular location">
    <subcellularLocation>
        <location evidence="2">Cytoplasm</location>
    </subcellularLocation>
</comment>
<comment type="similarity">
    <text evidence="2">Belongs to the RNA methyltransferase TrmD family.</text>
</comment>
<gene>
    <name type="primary">trmD</name>
    <name type="ordered locus">VC_0563</name>
</gene>
<keyword id="KW-0963">Cytoplasm</keyword>
<keyword id="KW-0489">Methyltransferase</keyword>
<keyword id="KW-1185">Reference proteome</keyword>
<keyword id="KW-0949">S-adenosyl-L-methionine</keyword>
<keyword id="KW-0808">Transferase</keyword>
<keyword id="KW-0819">tRNA processing</keyword>
<reference key="1">
    <citation type="journal article" date="2000" name="Nature">
        <title>DNA sequence of both chromosomes of the cholera pathogen Vibrio cholerae.</title>
        <authorList>
            <person name="Heidelberg J.F."/>
            <person name="Eisen J.A."/>
            <person name="Nelson W.C."/>
            <person name="Clayton R.A."/>
            <person name="Gwinn M.L."/>
            <person name="Dodson R.J."/>
            <person name="Haft D.H."/>
            <person name="Hickey E.K."/>
            <person name="Peterson J.D."/>
            <person name="Umayam L.A."/>
            <person name="Gill S.R."/>
            <person name="Nelson K.E."/>
            <person name="Read T.D."/>
            <person name="Tettelin H."/>
            <person name="Richardson D.L."/>
            <person name="Ermolaeva M.D."/>
            <person name="Vamathevan J.J."/>
            <person name="Bass S."/>
            <person name="Qin H."/>
            <person name="Dragoi I."/>
            <person name="Sellers P."/>
            <person name="McDonald L.A."/>
            <person name="Utterback T.R."/>
            <person name="Fleischmann R.D."/>
            <person name="Nierman W.C."/>
            <person name="White O."/>
            <person name="Salzberg S.L."/>
            <person name="Smith H.O."/>
            <person name="Colwell R.R."/>
            <person name="Mekalanos J.J."/>
            <person name="Venter J.C."/>
            <person name="Fraser C.M."/>
        </authorList>
    </citation>
    <scope>NUCLEOTIDE SEQUENCE [LARGE SCALE GENOMIC DNA]</scope>
    <source>
        <strain>ATCC 39315 / El Tor Inaba N16961</strain>
    </source>
</reference>
<accession>Q9KUF8</accession>
<name>TRMD_VIBCH</name>
<proteinExistence type="inferred from homology"/>
<sequence length="247" mass="27807">MWVGIVSLFPEMFRSVTDFGVTGQAVKKGLLSVEAWNPRDFAHDKRRTVDDKPYGGGPGMLMMVQPLRDAIHAAKQASPGKTKVIYLSPQGRKLDQQGVEELAQNQNLILICGRYEGVDERIIESEVDEEWSIGDFVMTGGELPAMTLIDSVSRFIPGVLGDFASAEEDSFANGLLDCPHYTRPEVLDGKEVPAVLKSGNHEDIRRWRLKQSLGRTWLRRPELLENLALTDEQEQLLTEYIKETRHQ</sequence>
<dbReference type="EC" id="2.1.1.228"/>
<dbReference type="EMBL" id="AE003852">
    <property type="protein sequence ID" value="AAF93731.1"/>
    <property type="molecule type" value="Genomic_DNA"/>
</dbReference>
<dbReference type="PIR" id="C82307">
    <property type="entry name" value="C82307"/>
</dbReference>
<dbReference type="RefSeq" id="NP_230214.1">
    <property type="nucleotide sequence ID" value="NC_002505.1"/>
</dbReference>
<dbReference type="RefSeq" id="WP_000270017.1">
    <property type="nucleotide sequence ID" value="NZ_LT906614.1"/>
</dbReference>
<dbReference type="SMR" id="Q9KUF8"/>
<dbReference type="STRING" id="243277.VC_0563"/>
<dbReference type="DNASU" id="2615240"/>
<dbReference type="EnsemblBacteria" id="AAF93731">
    <property type="protein sequence ID" value="AAF93731"/>
    <property type="gene ID" value="VC_0563"/>
</dbReference>
<dbReference type="GeneID" id="89515278"/>
<dbReference type="KEGG" id="vch:VC_0563"/>
<dbReference type="PATRIC" id="fig|243277.26.peg.538"/>
<dbReference type="eggNOG" id="COG0336">
    <property type="taxonomic scope" value="Bacteria"/>
</dbReference>
<dbReference type="HOGENOM" id="CLU_047363_0_1_6"/>
<dbReference type="Proteomes" id="UP000000584">
    <property type="component" value="Chromosome 1"/>
</dbReference>
<dbReference type="GO" id="GO:0005829">
    <property type="term" value="C:cytosol"/>
    <property type="evidence" value="ECO:0000318"/>
    <property type="project" value="GO_Central"/>
</dbReference>
<dbReference type="GO" id="GO:0052906">
    <property type="term" value="F:tRNA (guanine(37)-N1)-methyltransferase activity"/>
    <property type="evidence" value="ECO:0000318"/>
    <property type="project" value="GO_Central"/>
</dbReference>
<dbReference type="GO" id="GO:0002939">
    <property type="term" value="P:tRNA N1-guanine methylation"/>
    <property type="evidence" value="ECO:0000318"/>
    <property type="project" value="GO_Central"/>
</dbReference>
<dbReference type="CDD" id="cd18080">
    <property type="entry name" value="TrmD-like"/>
    <property type="match status" value="1"/>
</dbReference>
<dbReference type="FunFam" id="1.10.1270.20:FF:000001">
    <property type="entry name" value="tRNA (guanine-N(1)-)-methyltransferase"/>
    <property type="match status" value="1"/>
</dbReference>
<dbReference type="FunFam" id="3.40.1280.10:FF:000001">
    <property type="entry name" value="tRNA (guanine-N(1)-)-methyltransferase"/>
    <property type="match status" value="1"/>
</dbReference>
<dbReference type="Gene3D" id="3.40.1280.10">
    <property type="match status" value="1"/>
</dbReference>
<dbReference type="Gene3D" id="1.10.1270.20">
    <property type="entry name" value="tRNA(m1g37)methyltransferase, domain 2"/>
    <property type="match status" value="1"/>
</dbReference>
<dbReference type="HAMAP" id="MF_00605">
    <property type="entry name" value="TrmD"/>
    <property type="match status" value="1"/>
</dbReference>
<dbReference type="InterPro" id="IPR029028">
    <property type="entry name" value="Alpha/beta_knot_MTases"/>
</dbReference>
<dbReference type="InterPro" id="IPR023148">
    <property type="entry name" value="tRNA_m1G_MeTrfase_C_sf"/>
</dbReference>
<dbReference type="InterPro" id="IPR002649">
    <property type="entry name" value="tRNA_m1G_MeTrfase_TrmD"/>
</dbReference>
<dbReference type="InterPro" id="IPR029026">
    <property type="entry name" value="tRNA_m1G_MTases_N"/>
</dbReference>
<dbReference type="InterPro" id="IPR016009">
    <property type="entry name" value="tRNA_MeTrfase_TRMD/TRM10"/>
</dbReference>
<dbReference type="NCBIfam" id="NF000648">
    <property type="entry name" value="PRK00026.1"/>
    <property type="match status" value="1"/>
</dbReference>
<dbReference type="NCBIfam" id="TIGR00088">
    <property type="entry name" value="trmD"/>
    <property type="match status" value="1"/>
</dbReference>
<dbReference type="PANTHER" id="PTHR46417">
    <property type="entry name" value="TRNA (GUANINE-N(1)-)-METHYLTRANSFERASE"/>
    <property type="match status" value="1"/>
</dbReference>
<dbReference type="PANTHER" id="PTHR46417:SF1">
    <property type="entry name" value="TRNA (GUANINE-N(1)-)-METHYLTRANSFERASE"/>
    <property type="match status" value="1"/>
</dbReference>
<dbReference type="Pfam" id="PF01746">
    <property type="entry name" value="tRNA_m1G_MT"/>
    <property type="match status" value="1"/>
</dbReference>
<dbReference type="PIRSF" id="PIRSF000386">
    <property type="entry name" value="tRNA_mtase"/>
    <property type="match status" value="1"/>
</dbReference>
<dbReference type="SUPFAM" id="SSF75217">
    <property type="entry name" value="alpha/beta knot"/>
    <property type="match status" value="1"/>
</dbReference>
<protein>
    <recommendedName>
        <fullName>tRNA (guanine-N(1)-)-methyltransferase</fullName>
        <ecNumber>2.1.1.228</ecNumber>
    </recommendedName>
    <alternativeName>
        <fullName>M1G-methyltransferase</fullName>
    </alternativeName>
    <alternativeName>
        <fullName>tRNA [GM37] methyltransferase</fullName>
    </alternativeName>
</protein>